<organism>
    <name type="scientific">Arabidopsis thaliana</name>
    <name type="common">Mouse-ear cress</name>
    <dbReference type="NCBI Taxonomy" id="3702"/>
    <lineage>
        <taxon>Eukaryota</taxon>
        <taxon>Viridiplantae</taxon>
        <taxon>Streptophyta</taxon>
        <taxon>Embryophyta</taxon>
        <taxon>Tracheophyta</taxon>
        <taxon>Spermatophyta</taxon>
        <taxon>Magnoliopsida</taxon>
        <taxon>eudicotyledons</taxon>
        <taxon>Gunneridae</taxon>
        <taxon>Pentapetalae</taxon>
        <taxon>rosids</taxon>
        <taxon>malvids</taxon>
        <taxon>Brassicales</taxon>
        <taxon>Brassicaceae</taxon>
        <taxon>Camelineae</taxon>
        <taxon>Arabidopsis</taxon>
    </lineage>
</organism>
<gene>
    <name type="primary">ACC1</name>
    <name type="synonym">EMB22</name>
    <name type="synonym">GK</name>
    <name type="synonym">PAS3</name>
    <name type="ordered locus">At1g36160</name>
    <name type="ORF">F15C21.1</name>
</gene>
<accession>Q38970</accession>
<accession>Q0WNF3</accession>
<accession>Q38971</accession>
<accession>Q9C8G1</accession>
<accession>Q9SKV1</accession>
<reference key="1">
    <citation type="journal article" date="1994" name="Plant Physiol.">
        <title>Structure and expression of an Arabidopsis acetyl-coenzyme A carboxylase gene.</title>
        <authorList>
            <person name="Roesler K.R."/>
            <person name="Shorrosh B.S."/>
            <person name="Ohlrogge J.B."/>
        </authorList>
    </citation>
    <scope>NUCLEOTIDE SEQUENCE [GENOMIC DNA]</scope>
    <scope>TISSUE SPECIFICITY</scope>
    <source>
        <strain>cv. Columbia</strain>
    </source>
</reference>
<reference key="2">
    <citation type="journal article" date="1995" name="Plant Cell Physiol.">
        <title>Genomic organization of 251 kDa acetyl-CoA carboxylase genes in Arabidopsis: tandem gene duplication has made two differentially expressed isozymes.</title>
        <authorList>
            <person name="Yanai Y."/>
            <person name="Kawasaki T."/>
            <person name="Shimada H."/>
            <person name="Wurtele E.S."/>
            <person name="Nikolau B.J."/>
            <person name="Ichikawa N."/>
        </authorList>
    </citation>
    <scope>NUCLEOTIDE SEQUENCE [GENOMIC DNA / MRNA]</scope>
    <scope>TISSUE SPECIFICITY</scope>
    <source>
        <strain>cv. Columbia</strain>
    </source>
</reference>
<reference key="3">
    <citation type="journal article" date="2000" name="Nature">
        <title>Sequence and analysis of chromosome 1 of the plant Arabidopsis thaliana.</title>
        <authorList>
            <person name="Theologis A."/>
            <person name="Ecker J.R."/>
            <person name="Palm C.J."/>
            <person name="Federspiel N.A."/>
            <person name="Kaul S."/>
            <person name="White O."/>
            <person name="Alonso J."/>
            <person name="Altafi H."/>
            <person name="Araujo R."/>
            <person name="Bowman C.L."/>
            <person name="Brooks S.Y."/>
            <person name="Buehler E."/>
            <person name="Chan A."/>
            <person name="Chao Q."/>
            <person name="Chen H."/>
            <person name="Cheuk R.F."/>
            <person name="Chin C.W."/>
            <person name="Chung M.K."/>
            <person name="Conn L."/>
            <person name="Conway A.B."/>
            <person name="Conway A.R."/>
            <person name="Creasy T.H."/>
            <person name="Dewar K."/>
            <person name="Dunn P."/>
            <person name="Etgu P."/>
            <person name="Feldblyum T.V."/>
            <person name="Feng J.-D."/>
            <person name="Fong B."/>
            <person name="Fujii C.Y."/>
            <person name="Gill J.E."/>
            <person name="Goldsmith A.D."/>
            <person name="Haas B."/>
            <person name="Hansen N.F."/>
            <person name="Hughes B."/>
            <person name="Huizar L."/>
            <person name="Hunter J.L."/>
            <person name="Jenkins J."/>
            <person name="Johnson-Hopson C."/>
            <person name="Khan S."/>
            <person name="Khaykin E."/>
            <person name="Kim C.J."/>
            <person name="Koo H.L."/>
            <person name="Kremenetskaia I."/>
            <person name="Kurtz D.B."/>
            <person name="Kwan A."/>
            <person name="Lam B."/>
            <person name="Langin-Hooper S."/>
            <person name="Lee A."/>
            <person name="Lee J.M."/>
            <person name="Lenz C.A."/>
            <person name="Li J.H."/>
            <person name="Li Y.-P."/>
            <person name="Lin X."/>
            <person name="Liu S.X."/>
            <person name="Liu Z.A."/>
            <person name="Luros J.S."/>
            <person name="Maiti R."/>
            <person name="Marziali A."/>
            <person name="Militscher J."/>
            <person name="Miranda M."/>
            <person name="Nguyen M."/>
            <person name="Nierman W.C."/>
            <person name="Osborne B.I."/>
            <person name="Pai G."/>
            <person name="Peterson J."/>
            <person name="Pham P.K."/>
            <person name="Rizzo M."/>
            <person name="Rooney T."/>
            <person name="Rowley D."/>
            <person name="Sakano H."/>
            <person name="Salzberg S.L."/>
            <person name="Schwartz J.R."/>
            <person name="Shinn P."/>
            <person name="Southwick A.M."/>
            <person name="Sun H."/>
            <person name="Tallon L.J."/>
            <person name="Tambunga G."/>
            <person name="Toriumi M.J."/>
            <person name="Town C.D."/>
            <person name="Utterback T."/>
            <person name="Van Aken S."/>
            <person name="Vaysberg M."/>
            <person name="Vysotskaia V.S."/>
            <person name="Walker M."/>
            <person name="Wu D."/>
            <person name="Yu G."/>
            <person name="Fraser C.M."/>
            <person name="Venter J.C."/>
            <person name="Davis R.W."/>
        </authorList>
    </citation>
    <scope>NUCLEOTIDE SEQUENCE [LARGE SCALE GENOMIC DNA]</scope>
    <source>
        <strain>cv. Columbia</strain>
    </source>
</reference>
<reference key="4">
    <citation type="journal article" date="2017" name="Plant J.">
        <title>Araport11: a complete reannotation of the Arabidopsis thaliana reference genome.</title>
        <authorList>
            <person name="Cheng C.Y."/>
            <person name="Krishnakumar V."/>
            <person name="Chan A.P."/>
            <person name="Thibaud-Nissen F."/>
            <person name="Schobel S."/>
            <person name="Town C.D."/>
        </authorList>
    </citation>
    <scope>GENOME REANNOTATION</scope>
    <source>
        <strain>cv. Columbia</strain>
    </source>
</reference>
<reference key="5">
    <citation type="submission" date="2006-07" db="EMBL/GenBank/DDBJ databases">
        <title>Large-scale analysis of RIKEN Arabidopsis full-length (RAFL) cDNAs.</title>
        <authorList>
            <person name="Totoki Y."/>
            <person name="Seki M."/>
            <person name="Ishida J."/>
            <person name="Nakajima M."/>
            <person name="Enju A."/>
            <person name="Kamiya A."/>
            <person name="Narusaka M."/>
            <person name="Shin-i T."/>
            <person name="Nakagawa M."/>
            <person name="Sakamoto N."/>
            <person name="Oishi K."/>
            <person name="Kohara Y."/>
            <person name="Kobayashi M."/>
            <person name="Toyoda A."/>
            <person name="Sakaki Y."/>
            <person name="Sakurai T."/>
            <person name="Iida K."/>
            <person name="Akiyama K."/>
            <person name="Satou M."/>
            <person name="Toyoda T."/>
            <person name="Konagaya A."/>
            <person name="Carninci P."/>
            <person name="Kawai J."/>
            <person name="Hayashizaki Y."/>
            <person name="Shinozaki K."/>
        </authorList>
    </citation>
    <scope>NUCLEOTIDE SEQUENCE [LARGE SCALE MRNA] OF 1246-2254</scope>
    <source>
        <strain>cv. Columbia</strain>
    </source>
</reference>
<reference key="6">
    <citation type="journal article" date="1996" name="Plant J.">
        <title>The GURKE gene is required for normal organization of the apical region in the Arabidopsis embryo.</title>
        <authorList>
            <person name="Torres-Ruiz R.A."/>
            <person name="Lohner A."/>
            <person name="Juergens G."/>
        </authorList>
    </citation>
    <scope>DISRUPTION PHENOTYPE</scope>
</reference>
<reference key="7">
    <citation type="journal article" date="1997" name="Plant Physiol.">
        <title>Targeting of the Arabidopsis homomeric acetyl-coenzyme A carboxylase to plastids of rapeseeds.</title>
        <authorList>
            <person name="Roesler K."/>
            <person name="Shintani D."/>
            <person name="Savage L."/>
            <person name="Boddupalli S."/>
            <person name="Ohlrogge J."/>
        </authorList>
    </citation>
    <scope>FUNCTION</scope>
    <scope>CATALYTIC ACTIVITY AS ACETYL-COA CARBOXYLASE</scope>
</reference>
<reference key="8">
    <citation type="journal article" date="1998" name="Development">
        <title>The PASTICCINO genes of Arabidopsis thaliana are involved in the control of cell division and differentiation.</title>
        <authorList>
            <person name="Faure J.-D."/>
            <person name="Vittorioso P."/>
            <person name="Santoni V."/>
            <person name="Fraisier V."/>
            <person name="Prinsen E."/>
            <person name="Barlier I."/>
            <person name="Van Onckelen H."/>
            <person name="Caboche M."/>
            <person name="Bellini C."/>
        </authorList>
    </citation>
    <scope>FUNCTION</scope>
    <scope>DISRUPTION PHENOTYPE</scope>
</reference>
<reference key="9">
    <citation type="journal article" date="2002" name="Plant Physiol.">
        <title>Molecular characterization of a heteromeric ATP-citrate lyase that generates cytosolic acetyl-coenzyme A in Arabidopsis.</title>
        <authorList>
            <person name="Fatland B.L."/>
            <person name="Ke J."/>
            <person name="Anderson M.D."/>
            <person name="Mentzen W.I."/>
            <person name="Cui L.W."/>
            <person name="Allred C.C."/>
            <person name="Johnston J.L."/>
            <person name="Nikolau B.J."/>
            <person name="Wurtele E.S."/>
        </authorList>
    </citation>
    <scope>TISSUE SPECIFICITY</scope>
    <scope>DEVELOPMENTAL STAGE</scope>
</reference>
<reference key="10">
    <citation type="journal article" date="2003" name="Plant J.">
        <title>Multifunctional acetyl-CoA carboxylase 1 is essential for very long chain fatty acid elongation and embryo development in Arabidopsis.</title>
        <authorList>
            <person name="Baud S."/>
            <person name="Guyon V."/>
            <person name="Kronenberger J."/>
            <person name="Wuilleme S."/>
            <person name="Miquel M."/>
            <person name="Caboche M."/>
            <person name="Lepiniec L."/>
            <person name="Rochat C."/>
        </authorList>
    </citation>
    <scope>FUNCTION</scope>
    <scope>TISSUE SPECIFICITY</scope>
    <scope>DISRUPTION PHENOTYPE</scope>
    <source>
        <strain>cv. Wassilewskija</strain>
    </source>
</reference>
<reference key="11">
    <citation type="journal article" date="2004" name="EMBO Rep.">
        <title>gurke and pasticcino3 mutants affected in embryo development are impaired in acetyl-CoA carboxylase.</title>
        <authorList>
            <person name="Baud S."/>
            <person name="Bellec Y."/>
            <person name="Miquel M."/>
            <person name="Bellini C."/>
            <person name="Caboche M."/>
            <person name="Lepiniec L."/>
            <person name="Faure J.D."/>
            <person name="Rochat C."/>
        </authorList>
    </citation>
    <scope>FUNCTION</scope>
    <scope>DISRUPTION PHENOTYPE</scope>
    <scope>MUTAGENESIS OF GLU-1588 AND GLY-1787</scope>
    <source>
        <strain>cv. Wassilewskija</strain>
    </source>
</reference>
<reference key="12">
    <citation type="journal article" date="2004" name="Plant Cell Physiol.">
        <title>The GURKE gene encoding an acetyl-CoA carboxylase is required for partitioning the embryo apex into three subregions in Arabidopsis.</title>
        <authorList>
            <person name="Kajiwara T."/>
            <person name="Furutani M."/>
            <person name="Hibara K."/>
            <person name="Tasaka M."/>
        </authorList>
    </citation>
    <scope>FUNCTION</scope>
    <scope>DISRUPTION PHENOTYPE</scope>
</reference>
<reference key="13">
    <citation type="journal article" date="2009" name="Plant Physiol.">
        <title>Large-scale Arabidopsis phosphoproteome profiling reveals novel chloroplast kinase substrates and phosphorylation networks.</title>
        <authorList>
            <person name="Reiland S."/>
            <person name="Messerli G."/>
            <person name="Baerenfaller K."/>
            <person name="Gerrits B."/>
            <person name="Endler A."/>
            <person name="Grossmann J."/>
            <person name="Gruissem W."/>
            <person name="Baginsky S."/>
        </authorList>
    </citation>
    <scope>PHOSPHORYLATION [LARGE SCALE ANALYSIS] AT THR-1031 AND SER-1192</scope>
    <scope>IDENTIFICATION BY MASS SPECTROMETRY [LARGE SCALE ANALYSIS]</scope>
</reference>
<reference key="14">
    <citation type="journal article" date="2010" name="Plant Cell">
        <title>Very-long-chain fatty acids are involved in polar auxin transport and developmental patterning in Arabidopsis.</title>
        <authorList>
            <person name="Roudier F."/>
            <person name="Gissot L."/>
            <person name="Beaudoin F."/>
            <person name="Haslam R."/>
            <person name="Michaelson L."/>
            <person name="Marion J."/>
            <person name="Molino D."/>
            <person name="Lima A."/>
            <person name="Bach L."/>
            <person name="Morin H."/>
            <person name="Tellier F."/>
            <person name="Palauqui J.C."/>
            <person name="Bellec Y."/>
            <person name="Renne C."/>
            <person name="Miquel M."/>
            <person name="Dacosta M."/>
            <person name="Vignard J."/>
            <person name="Rochat C."/>
            <person name="Markham J.E."/>
            <person name="Moreau P."/>
            <person name="Napier J."/>
            <person name="Faure J.D."/>
        </authorList>
    </citation>
    <scope>FUNCTION</scope>
</reference>
<reference key="15">
    <citation type="journal article" date="2013" name="Plant Physiol. Biochem.">
        <title>The flavonoid biosynthetic pathway in Arabidopsis: Structural and genetic diversity.</title>
        <authorList>
            <person name="Saito K."/>
            <person name="Yonekura-Sakakibara K."/>
            <person name="Nakabayashi R."/>
            <person name="Higashi Y."/>
            <person name="Yamazaki M."/>
            <person name="Tohge T."/>
            <person name="Fernie A.R."/>
        </authorList>
    </citation>
    <scope>REVIEW</scope>
    <scope>NOMENCLATURE</scope>
</reference>
<name>ACC1_ARATH</name>
<proteinExistence type="evidence at protein level"/>
<keyword id="KW-0021">Allosteric enzyme</keyword>
<keyword id="KW-0067">ATP-binding</keyword>
<keyword id="KW-0092">Biotin</keyword>
<keyword id="KW-0963">Cytoplasm</keyword>
<keyword id="KW-0275">Fatty acid biosynthesis</keyword>
<keyword id="KW-0276">Fatty acid metabolism</keyword>
<keyword id="KW-0436">Ligase</keyword>
<keyword id="KW-0444">Lipid biosynthesis</keyword>
<keyword id="KW-0443">Lipid metabolism</keyword>
<keyword id="KW-0460">Magnesium</keyword>
<keyword id="KW-0464">Manganese</keyword>
<keyword id="KW-0479">Metal-binding</keyword>
<keyword id="KW-0511">Multifunctional enzyme</keyword>
<keyword id="KW-0547">Nucleotide-binding</keyword>
<keyword id="KW-0597">Phosphoprotein</keyword>
<keyword id="KW-1185">Reference proteome</keyword>
<sequence>MAGSVNGNHSAVGPGINYETVSQVDEFCKALRGKRPIHSILIANNGMAAVKFIRSVRTWAYETFGTEKAILLVGMATPEDMRINAEHIRIADQFVEVPGGTNNNNYANVQLIVEMAEVTRVDAVWPGWGHASENPELPDALDAKGIIFLGPPASSMAALGDKIGSSLIAQAADVPTLPWSGSHVKIPPNSNLVTIPEEIYRQACVYTTEEAIASCQVVGYPAMIKASWGGGGKGIRKVHNDDEVRALFKQVQGEVPGSPIFIMKVASQSRHLEVQLLCDKHGNVSALHSRDCSVQRRHQKIIEEGPITVAPPETVKKLEQAARRLAKSVNYVGAATVEYLYSMDTGEYYFLELNPRLQVEHPVTEWIAEINLPAAQVAVGMGIPLWQIPEIRRFYGIEHGGGYDSWRKTSVVAFPFDFDKAQSIRPKGHCVAVRVTSEDPDDGFKPTSGRVQELSFKSKPNVWAYFSVKSGGGIHEFSDSQFGHVFAFGESRALAIANMVLGLKEIQIRGEIRTNVDYTIDLLHASDYRDNKIHTGWLDSRIAMRVRAERPPWYLSVVGGALYKASATSAAVVSDYVGYLEKGQIPPKHISLVHSQVSLNIEGSKYTIDVVRGGSGTYRLRMNKSEVVAEIHTLRDGGLLMQLDGKSHVIYAEEEAAGTRLLIDGRTCLLQNDHDPSKLMAETPCKLMRYLISDNSNIDADTPYAEVEVMKMCMPLLSPASGVIHFKMSEGQAMQAGELIANLDLDDPSAVRKAEPFHGSFPRLGLPTAISGRVHQRCAATLNAARMILAGYEHKVDEVVQDLLNCLDSPELPFLQWQECFAVLATRLPKNLRNMLESKYREFESISRNSLTTDFPAKLLKGILEAHLSSCDEKERGALERLIEPLMSLAKSYEGGRESHARVIVHSLFEEYLSVEELFNDNMLADVIERMRQLYKKDLLKIVDIVLSHQGIKNKNKLVLRLMEQLVYPNPAAYRDKLIRFSTLNHTNYSELALKASQLLEQTKLSELRSNIARSLSELEMFTEDGENMDTPKRKSAINERIEDLVSASLAVEDALVGLFDHSDHTLQRRVVETYIRRLYQPYVVKDSVRMQWHRSGLLASWEFLEEHMERKNIGLDDPDTSEKGLVEKRSKRKWGAMVIIKSLQFLPSIISAALRETKHNDYETAGAPLSGNMMHIAIVGINNQMSLLQDSGDEDQAQERVNKLAKILKEEEVSSSLCSAGVGVISCIIQRDEGRTPMRHSFHWSLEKQYYVEEPLLRHLEPPLSIYLELDKLKGYSNIQYTPSRDRQWHLYTVTDKPVPIKRMFLRSLVRQATMNDGFILQQGQDKQLSQTLISMAFTSKCVLRSLMDAMEELELNAHNAAMKPDHAHMFLCILREQQIDDLVPFPRRVEVNAEDEETTVEMILEEAAREIHRSVGVRMHRLGVCEWEVRLWLVSSGLACGAWRVVVANVTGRTCTVHIYREVETPGRNSLIYHSITKKGPLHETPISDQYKPLGYLDRQRLAARRSNTTYCYDFPLAFGTALELLWASQHPGVKKPYKDTLINVKELVFSKPEGSSGTSLDLVERPPGLNDFGMVAWCLDMSTPEFPMGRKLLVIANDVTFKAGSFGPREDAFFLAVTELACAKKLPLIYLAANSGARLGVAEEVKACFKVGWSDEISPENGFQYIYLSPEDHERIGSSVIAHEVKLSSGETRWVIDTIVGKEDGIGVENLTGSGAIAGAYSKAYNETFTLTFVSGRTVGIGAYLARLGMRCIQRLDQPIILTGFSTLNKLLGREVYSSHMQLGGPKIMGTNGVVHLTVSDDLEGVSAILNWLSYIPAYVGGPLPVLAPLDPPERIVEYVPENSCDPRAAIAGVKDNTGKWLGGIFDKNSFIETLEGWARTVVTGRAKLGGIPVGVVAVETQTVMQIIPADPGQLDSHERVVPQAGQVWFPDSAAKTAQALMDFNREELPLFILANWRGFSGGQRDLFEGILQAGSTIVENLRTYRQPVFVYIPMMGELRGGAWVVVDSQINSDYVEMYADETARGNVLEPEGTIEIKFRTKELLECMGRLDQKLISLKAKLQDAKQSEAYANIELLQQQIKAREKQLLPVYIQIATKFAELHDTSMRMAAKGVIKSVVEWSGSRSFFYKKLNRRIAESSLVKNVREASGDNLAYKSSMRLIQDWFCNSDIAKGKEEAWTDDQVFFTWKDNVSNYELKLSELRAQKLLNQLAEIGNSSDLQALPQGLANLLNKVEPSKREELVAAIRKVLG</sequence>
<dbReference type="EC" id="6.4.1.2" evidence="16"/>
<dbReference type="EC" id="6.3.4.14"/>
<dbReference type="EMBL" id="L27074">
    <property type="protein sequence ID" value="AAC41645.1"/>
    <property type="molecule type" value="Genomic_DNA"/>
</dbReference>
<dbReference type="EMBL" id="D34630">
    <property type="protein sequence ID" value="BAA07012.1"/>
    <property type="molecule type" value="mRNA"/>
</dbReference>
<dbReference type="EMBL" id="AF062308">
    <property type="protein sequence ID" value="AAG40563.1"/>
    <property type="molecule type" value="Genomic_DNA"/>
</dbReference>
<dbReference type="EMBL" id="AC006228">
    <property type="protein sequence ID" value="AAF18638.2"/>
    <property type="status" value="ALT_SEQ"/>
    <property type="molecule type" value="Genomic_DNA"/>
</dbReference>
<dbReference type="EMBL" id="AC025781">
    <property type="protein sequence ID" value="AAG51250.1"/>
    <property type="status" value="ALT_SEQ"/>
    <property type="molecule type" value="Genomic_DNA"/>
</dbReference>
<dbReference type="EMBL" id="CP002684">
    <property type="protein sequence ID" value="AEE31849.1"/>
    <property type="molecule type" value="Genomic_DNA"/>
</dbReference>
<dbReference type="EMBL" id="CP002684">
    <property type="protein sequence ID" value="AEE31850.1"/>
    <property type="molecule type" value="Genomic_DNA"/>
</dbReference>
<dbReference type="EMBL" id="AK229488">
    <property type="protein sequence ID" value="BAF01346.1"/>
    <property type="molecule type" value="mRNA"/>
</dbReference>
<dbReference type="PIR" id="D86483">
    <property type="entry name" value="D86483"/>
</dbReference>
<dbReference type="RefSeq" id="NP_001185143.1">
    <property type="nucleotide sequence ID" value="NM_001198214.2"/>
</dbReference>
<dbReference type="RefSeq" id="NP_174849.2">
    <property type="nucleotide sequence ID" value="NM_103313.4"/>
</dbReference>
<dbReference type="SMR" id="Q38970"/>
<dbReference type="BioGRID" id="25753">
    <property type="interactions" value="4"/>
</dbReference>
<dbReference type="FunCoup" id="Q38970">
    <property type="interactions" value="2394"/>
</dbReference>
<dbReference type="IntAct" id="Q38970">
    <property type="interactions" value="3"/>
</dbReference>
<dbReference type="STRING" id="3702.Q38970"/>
<dbReference type="iPTMnet" id="Q38970"/>
<dbReference type="PaxDb" id="3702-AT1G36160.2"/>
<dbReference type="ProteomicsDB" id="244566"/>
<dbReference type="EnsemblPlants" id="AT1G36160.1">
    <property type="protein sequence ID" value="AT1G36160.1"/>
    <property type="gene ID" value="AT1G36160"/>
</dbReference>
<dbReference type="EnsemblPlants" id="AT1G36160.2">
    <property type="protein sequence ID" value="AT1G36160.2"/>
    <property type="gene ID" value="AT1G36160"/>
</dbReference>
<dbReference type="GeneID" id="840521"/>
<dbReference type="Gramene" id="AT1G36160.1">
    <property type="protein sequence ID" value="AT1G36160.1"/>
    <property type="gene ID" value="AT1G36160"/>
</dbReference>
<dbReference type="Gramene" id="AT1G36160.2">
    <property type="protein sequence ID" value="AT1G36160.2"/>
    <property type="gene ID" value="AT1G36160"/>
</dbReference>
<dbReference type="KEGG" id="ath:AT1G36160"/>
<dbReference type="Araport" id="AT1G36160"/>
<dbReference type="TAIR" id="AT1G36160">
    <property type="gene designation" value="ACC1"/>
</dbReference>
<dbReference type="eggNOG" id="KOG0368">
    <property type="taxonomic scope" value="Eukaryota"/>
</dbReference>
<dbReference type="HOGENOM" id="CLU_000395_5_2_1"/>
<dbReference type="InParanoid" id="Q38970"/>
<dbReference type="OMA" id="PTPKGHC"/>
<dbReference type="PhylomeDB" id="Q38970"/>
<dbReference type="BioCyc" id="ARA:AT1G36160-MONOMER"/>
<dbReference type="BioCyc" id="MetaCyc:AT1G36160-MONOMER"/>
<dbReference type="BRENDA" id="6.4.1.2">
    <property type="organism ID" value="399"/>
</dbReference>
<dbReference type="UniPathway" id="UPA00655">
    <property type="reaction ID" value="UER00711"/>
</dbReference>
<dbReference type="PRO" id="PR:Q38970"/>
<dbReference type="Proteomes" id="UP000006548">
    <property type="component" value="Chromosome 1"/>
</dbReference>
<dbReference type="ExpressionAtlas" id="Q38970">
    <property type="expression patterns" value="baseline and differential"/>
</dbReference>
<dbReference type="GO" id="GO:0005829">
    <property type="term" value="C:cytosol"/>
    <property type="evidence" value="ECO:0007669"/>
    <property type="project" value="UniProtKB-SubCell"/>
</dbReference>
<dbReference type="GO" id="GO:0005634">
    <property type="term" value="C:nucleus"/>
    <property type="evidence" value="ECO:0007005"/>
    <property type="project" value="TAIR"/>
</dbReference>
<dbReference type="GO" id="GO:0003989">
    <property type="term" value="F:acetyl-CoA carboxylase activity"/>
    <property type="evidence" value="ECO:0000250"/>
    <property type="project" value="TAIR"/>
</dbReference>
<dbReference type="GO" id="GO:0005524">
    <property type="term" value="F:ATP binding"/>
    <property type="evidence" value="ECO:0007669"/>
    <property type="project" value="UniProtKB-KW"/>
</dbReference>
<dbReference type="GO" id="GO:0004075">
    <property type="term" value="F:biotin carboxylase activity"/>
    <property type="evidence" value="ECO:0007669"/>
    <property type="project" value="UniProtKB-EC"/>
</dbReference>
<dbReference type="GO" id="GO:0046872">
    <property type="term" value="F:metal ion binding"/>
    <property type="evidence" value="ECO:0007669"/>
    <property type="project" value="UniProtKB-KW"/>
</dbReference>
<dbReference type="GO" id="GO:0009793">
    <property type="term" value="P:embryo development ending in seed dormancy"/>
    <property type="evidence" value="ECO:0000315"/>
    <property type="project" value="TAIR"/>
</dbReference>
<dbReference type="GO" id="GO:0030497">
    <property type="term" value="P:fatty acid elongation"/>
    <property type="evidence" value="ECO:0000315"/>
    <property type="project" value="TAIR"/>
</dbReference>
<dbReference type="GO" id="GO:2001295">
    <property type="term" value="P:malonyl-CoA biosynthetic process"/>
    <property type="evidence" value="ECO:0007669"/>
    <property type="project" value="UniProtKB-UniPathway"/>
</dbReference>
<dbReference type="GO" id="GO:0009933">
    <property type="term" value="P:meristem structural organization"/>
    <property type="evidence" value="ECO:0000315"/>
    <property type="project" value="TAIR"/>
</dbReference>
<dbReference type="GO" id="GO:0010072">
    <property type="term" value="P:primary shoot apical meristem specification"/>
    <property type="evidence" value="ECO:0000315"/>
    <property type="project" value="TAIR"/>
</dbReference>
<dbReference type="GO" id="GO:0009735">
    <property type="term" value="P:response to cytokinin"/>
    <property type="evidence" value="ECO:0000315"/>
    <property type="project" value="TAIR"/>
</dbReference>
<dbReference type="GO" id="GO:0048364">
    <property type="term" value="P:root development"/>
    <property type="evidence" value="ECO:0000315"/>
    <property type="project" value="TAIR"/>
</dbReference>
<dbReference type="GO" id="GO:0048367">
    <property type="term" value="P:shoot system development"/>
    <property type="evidence" value="ECO:0000315"/>
    <property type="project" value="TAIR"/>
</dbReference>
<dbReference type="CDD" id="cd06850">
    <property type="entry name" value="biotinyl_domain"/>
    <property type="match status" value="1"/>
</dbReference>
<dbReference type="FunFam" id="2.40.50.100:FF:000005">
    <property type="entry name" value="Acetyl-CoA carboxylase 1"/>
    <property type="match status" value="1"/>
</dbReference>
<dbReference type="FunFam" id="3.30.470.20:FF:000043">
    <property type="entry name" value="acetyl-CoA carboxylase 1-like"/>
    <property type="match status" value="1"/>
</dbReference>
<dbReference type="FunFam" id="3.30.1490.20:FF:000003">
    <property type="entry name" value="acetyl-CoA carboxylase isoform X1"/>
    <property type="match status" value="1"/>
</dbReference>
<dbReference type="FunFam" id="3.40.50.20:FF:000005">
    <property type="entry name" value="acetyl-CoA carboxylase isoform X2"/>
    <property type="match status" value="1"/>
</dbReference>
<dbReference type="FunFam" id="3.90.226.10:FF:000010">
    <property type="entry name" value="acetyl-CoA carboxylase isoform X2"/>
    <property type="match status" value="1"/>
</dbReference>
<dbReference type="Gene3D" id="2.40.50.100">
    <property type="match status" value="1"/>
</dbReference>
<dbReference type="Gene3D" id="3.40.50.20">
    <property type="match status" value="1"/>
</dbReference>
<dbReference type="Gene3D" id="3.90.226.10">
    <property type="entry name" value="2-enoyl-CoA Hydratase, Chain A, domain 1"/>
    <property type="match status" value="2"/>
</dbReference>
<dbReference type="Gene3D" id="3.30.1490.20">
    <property type="entry name" value="ATP-grasp fold, A domain"/>
    <property type="match status" value="1"/>
</dbReference>
<dbReference type="Gene3D" id="3.30.470.20">
    <property type="entry name" value="ATP-grasp fold, B domain"/>
    <property type="match status" value="1"/>
</dbReference>
<dbReference type="Gene3D" id="2.40.460.10">
    <property type="entry name" value="Biotin dependent carboxylase carboxyltransferase"/>
    <property type="match status" value="1"/>
</dbReference>
<dbReference type="Gene3D" id="3.90.1770.10">
    <property type="entry name" value="PreATP-grasp domain"/>
    <property type="match status" value="1"/>
</dbReference>
<dbReference type="InterPro" id="IPR049076">
    <property type="entry name" value="ACCA"/>
</dbReference>
<dbReference type="InterPro" id="IPR049074">
    <property type="entry name" value="ACCA_BT"/>
</dbReference>
<dbReference type="InterPro" id="IPR034733">
    <property type="entry name" value="AcCoA_carboxyl_beta"/>
</dbReference>
<dbReference type="InterPro" id="IPR013537">
    <property type="entry name" value="AcCoA_COase_cen"/>
</dbReference>
<dbReference type="InterPro" id="IPR011761">
    <property type="entry name" value="ATP-grasp"/>
</dbReference>
<dbReference type="InterPro" id="IPR013815">
    <property type="entry name" value="ATP_grasp_subdomain_1"/>
</dbReference>
<dbReference type="InterPro" id="IPR005481">
    <property type="entry name" value="BC-like_N"/>
</dbReference>
<dbReference type="InterPro" id="IPR001882">
    <property type="entry name" value="Biotin_BS"/>
</dbReference>
<dbReference type="InterPro" id="IPR011764">
    <property type="entry name" value="Biotin_carboxylation_dom"/>
</dbReference>
<dbReference type="InterPro" id="IPR005482">
    <property type="entry name" value="Biotin_COase_C"/>
</dbReference>
<dbReference type="InterPro" id="IPR000089">
    <property type="entry name" value="Biotin_lipoyl"/>
</dbReference>
<dbReference type="InterPro" id="IPR005479">
    <property type="entry name" value="CbamoylP_synth_lsu-like_ATP-bd"/>
</dbReference>
<dbReference type="InterPro" id="IPR029045">
    <property type="entry name" value="ClpP/crotonase-like_dom_sf"/>
</dbReference>
<dbReference type="InterPro" id="IPR011763">
    <property type="entry name" value="COA_CT_C"/>
</dbReference>
<dbReference type="InterPro" id="IPR011762">
    <property type="entry name" value="COA_CT_N"/>
</dbReference>
<dbReference type="InterPro" id="IPR016185">
    <property type="entry name" value="PreATP-grasp_dom_sf"/>
</dbReference>
<dbReference type="InterPro" id="IPR011054">
    <property type="entry name" value="Rudment_hybrid_motif"/>
</dbReference>
<dbReference type="InterPro" id="IPR011053">
    <property type="entry name" value="Single_hybrid_motif"/>
</dbReference>
<dbReference type="PANTHER" id="PTHR45728:SF3">
    <property type="entry name" value="ACETYL-COA CARBOXYLASE"/>
    <property type="match status" value="1"/>
</dbReference>
<dbReference type="PANTHER" id="PTHR45728">
    <property type="entry name" value="ACETYL-COA CARBOXYLASE, ISOFORM A"/>
    <property type="match status" value="1"/>
</dbReference>
<dbReference type="Pfam" id="PF08326">
    <property type="entry name" value="ACC_central"/>
    <property type="match status" value="1"/>
</dbReference>
<dbReference type="Pfam" id="PF21385">
    <property type="entry name" value="ACCA_BT"/>
    <property type="match status" value="1"/>
</dbReference>
<dbReference type="Pfam" id="PF02785">
    <property type="entry name" value="Biotin_carb_C"/>
    <property type="match status" value="1"/>
</dbReference>
<dbReference type="Pfam" id="PF00289">
    <property type="entry name" value="Biotin_carb_N"/>
    <property type="match status" value="1"/>
</dbReference>
<dbReference type="Pfam" id="PF00364">
    <property type="entry name" value="Biotin_lipoyl"/>
    <property type="match status" value="1"/>
</dbReference>
<dbReference type="Pfam" id="PF01039">
    <property type="entry name" value="Carboxyl_trans"/>
    <property type="match status" value="1"/>
</dbReference>
<dbReference type="Pfam" id="PF02786">
    <property type="entry name" value="CPSase_L_D2"/>
    <property type="match status" value="1"/>
</dbReference>
<dbReference type="SMART" id="SM00878">
    <property type="entry name" value="Biotin_carb_C"/>
    <property type="match status" value="1"/>
</dbReference>
<dbReference type="SUPFAM" id="SSF52096">
    <property type="entry name" value="ClpP/crotonase"/>
    <property type="match status" value="2"/>
</dbReference>
<dbReference type="SUPFAM" id="SSF56059">
    <property type="entry name" value="Glutathione synthetase ATP-binding domain-like"/>
    <property type="match status" value="1"/>
</dbReference>
<dbReference type="SUPFAM" id="SSF52440">
    <property type="entry name" value="PreATP-grasp domain"/>
    <property type="match status" value="1"/>
</dbReference>
<dbReference type="SUPFAM" id="SSF51246">
    <property type="entry name" value="Rudiment single hybrid motif"/>
    <property type="match status" value="1"/>
</dbReference>
<dbReference type="SUPFAM" id="SSF51230">
    <property type="entry name" value="Single hybrid motif"/>
    <property type="match status" value="1"/>
</dbReference>
<dbReference type="PROSITE" id="PS50975">
    <property type="entry name" value="ATP_GRASP"/>
    <property type="match status" value="1"/>
</dbReference>
<dbReference type="PROSITE" id="PS50979">
    <property type="entry name" value="BC"/>
    <property type="match status" value="1"/>
</dbReference>
<dbReference type="PROSITE" id="PS00188">
    <property type="entry name" value="BIOTIN"/>
    <property type="match status" value="1"/>
</dbReference>
<dbReference type="PROSITE" id="PS50968">
    <property type="entry name" value="BIOTINYL_LIPOYL"/>
    <property type="match status" value="1"/>
</dbReference>
<dbReference type="PROSITE" id="PS50989">
    <property type="entry name" value="COA_CT_CTER"/>
    <property type="match status" value="1"/>
</dbReference>
<dbReference type="PROSITE" id="PS50980">
    <property type="entry name" value="COA_CT_NTER"/>
    <property type="match status" value="1"/>
</dbReference>
<dbReference type="PROSITE" id="PS00867">
    <property type="entry name" value="CPSASE_2"/>
    <property type="match status" value="1"/>
</dbReference>
<protein>
    <recommendedName>
        <fullName>Acetyl-CoA carboxylase 1</fullName>
        <shortName>AtACC1</shortName>
        <ecNumber evidence="16">6.4.1.2</ecNumber>
    </recommendedName>
    <alternativeName>
        <fullName>Protein EMBRYO DEFECTIVE 22</fullName>
    </alternativeName>
    <alternativeName>
        <fullName>Protein GURKE</fullName>
    </alternativeName>
    <alternativeName>
        <fullName>Protein PASTICCINO 3</fullName>
    </alternativeName>
    <domain>
        <recommendedName>
            <fullName>Biotin carboxylase</fullName>
            <ecNumber>6.3.4.14</ecNumber>
        </recommendedName>
    </domain>
</protein>
<evidence type="ECO:0000250" key="1"/>
<evidence type="ECO:0000250" key="2">
    <source>
        <dbReference type="UniProtKB" id="O04983"/>
    </source>
</evidence>
<evidence type="ECO:0000255" key="3">
    <source>
        <dbReference type="PROSITE-ProRule" id="PRU00409"/>
    </source>
</evidence>
<evidence type="ECO:0000255" key="4">
    <source>
        <dbReference type="PROSITE-ProRule" id="PRU00969"/>
    </source>
</evidence>
<evidence type="ECO:0000255" key="5">
    <source>
        <dbReference type="PROSITE-ProRule" id="PRU01066"/>
    </source>
</evidence>
<evidence type="ECO:0000255" key="6">
    <source>
        <dbReference type="PROSITE-ProRule" id="PRU01136"/>
    </source>
</evidence>
<evidence type="ECO:0000255" key="7">
    <source>
        <dbReference type="PROSITE-ProRule" id="PRU01137"/>
    </source>
</evidence>
<evidence type="ECO:0000255" key="8">
    <source>
        <dbReference type="PROSITE-ProRule" id="PRU01138"/>
    </source>
</evidence>
<evidence type="ECO:0000269" key="9">
    <source>
    </source>
</evidence>
<evidence type="ECO:0000269" key="10">
    <source>
    </source>
</evidence>
<evidence type="ECO:0000269" key="11">
    <source>
    </source>
</evidence>
<evidence type="ECO:0000269" key="12">
    <source>
    </source>
</evidence>
<evidence type="ECO:0000269" key="13">
    <source>
    </source>
</evidence>
<evidence type="ECO:0000269" key="14">
    <source>
    </source>
</evidence>
<evidence type="ECO:0000269" key="15">
    <source>
    </source>
</evidence>
<evidence type="ECO:0000269" key="16">
    <source>
    </source>
</evidence>
<evidence type="ECO:0000269" key="17">
    <source>
    </source>
</evidence>
<evidence type="ECO:0000269" key="18">
    <source>
    </source>
</evidence>
<evidence type="ECO:0000305" key="19"/>
<evidence type="ECO:0007744" key="20">
    <source>
    </source>
</evidence>
<comment type="function">
    <text evidence="10 11 12 13 16 18">Multifunctional enzyme that catalyzes the carboxylation of acetyl-CoA, forming malonyl-CoA, which is used in the plastid for fatty acid synthesis and in the cytosol in various biosynthetic pathways including fatty acid elongation. Required for very long chain fatty acids elongation. Necessary for embryo and plant development. Plays a central function in embryo morphogenesis, especially in apical meristem development. Involved in cell proliferation and tissue patterning. May act as a repressor of cytokinin response.</text>
</comment>
<comment type="catalytic activity">
    <reaction evidence="16">
        <text>hydrogencarbonate + acetyl-CoA + ATP = malonyl-CoA + ADP + phosphate + H(+)</text>
        <dbReference type="Rhea" id="RHEA:11308"/>
        <dbReference type="ChEBI" id="CHEBI:15378"/>
        <dbReference type="ChEBI" id="CHEBI:17544"/>
        <dbReference type="ChEBI" id="CHEBI:30616"/>
        <dbReference type="ChEBI" id="CHEBI:43474"/>
        <dbReference type="ChEBI" id="CHEBI:57288"/>
        <dbReference type="ChEBI" id="CHEBI:57384"/>
        <dbReference type="ChEBI" id="CHEBI:456216"/>
        <dbReference type="EC" id="6.4.1.2"/>
    </reaction>
</comment>
<comment type="catalytic activity">
    <reaction evidence="2">
        <text>N(6)-biotinyl-L-lysyl-[protein] + hydrogencarbonate + ATP = N(6)-carboxybiotinyl-L-lysyl-[protein] + ADP + phosphate + H(+)</text>
        <dbReference type="Rhea" id="RHEA:13501"/>
        <dbReference type="Rhea" id="RHEA-COMP:10505"/>
        <dbReference type="Rhea" id="RHEA-COMP:10506"/>
        <dbReference type="ChEBI" id="CHEBI:15378"/>
        <dbReference type="ChEBI" id="CHEBI:17544"/>
        <dbReference type="ChEBI" id="CHEBI:30616"/>
        <dbReference type="ChEBI" id="CHEBI:43474"/>
        <dbReference type="ChEBI" id="CHEBI:83144"/>
        <dbReference type="ChEBI" id="CHEBI:83145"/>
        <dbReference type="ChEBI" id="CHEBI:456216"/>
        <dbReference type="EC" id="6.3.4.14"/>
    </reaction>
</comment>
<comment type="cofactor">
    <cofactor evidence="5">
        <name>biotin</name>
        <dbReference type="ChEBI" id="CHEBI:57586"/>
    </cofactor>
</comment>
<comment type="cofactor">
    <cofactor evidence="3 4">
        <name>Mg(2+)</name>
        <dbReference type="ChEBI" id="CHEBI:18420"/>
    </cofactor>
    <cofactor evidence="3 4">
        <name>Mn(2+)</name>
        <dbReference type="ChEBI" id="CHEBI:29035"/>
    </cofactor>
    <text evidence="3 4">Binds 2 magnesium or manganese ions per subunit.</text>
</comment>
<comment type="pathway">
    <text>Lipid metabolism; malonyl-CoA biosynthesis; malonyl-CoA from acetyl-CoA: step 1/1.</text>
</comment>
<comment type="subunit">
    <text evidence="19">Homodimer.</text>
</comment>
<comment type="subcellular location">
    <subcellularLocation>
        <location evidence="19">Cytoplasm</location>
        <location evidence="19">Cytosol</location>
    </subcellularLocation>
</comment>
<comment type="tissue specificity">
    <text evidence="9 10 14 15">Expressed in roots, trichomes, epidermal leaf cells, siliques, petals, anthers, and seeds.</text>
</comment>
<comment type="developmental stage">
    <text evidence="9">Expressed in flower buds at stage 6 of development in tapetal cells and at stage 10 in the epidermal cells of growing petals and ovaries. In young siliques, expressed transiently in the inner integument of the ovules just prior to testal deposition.</text>
</comment>
<comment type="disruption phenotype">
    <text evidence="10 11 12 17 18">Embryo lethal with an arrest in development at the late globular stage in acc1-1 and acc1-2 null allele mutants. In the leaky pas3 and gk alleles, defect in embryo development, very short and thick hypocotyl and misshaped cotyledons that do not expand. Abnormal root development, abnormal fused leaves and compact rosettes with multiple shoots. Uncoordinated cell divisions in the apical region. Reduced levels of very long chain fatty acids in seeds.</text>
</comment>
<comment type="miscellaneous">
    <text>The acc1-1 and pas3-1 mutants can be partially complemented by exogenous supply of malonate.</text>
</comment>
<comment type="sequence caution" evidence="19">
    <conflict type="erroneous gene model prediction">
        <sequence resource="EMBL-CDS" id="AAF18638"/>
    </conflict>
</comment>
<comment type="sequence caution" evidence="19">
    <conflict type="erroneous gene model prediction">
        <sequence resource="EMBL-CDS" id="AAG51250"/>
    </conflict>
</comment>
<feature type="chain" id="PRO_0000412211" description="Acetyl-CoA carboxylase 1">
    <location>
        <begin position="1"/>
        <end position="2254"/>
    </location>
</feature>
<feature type="domain" description="Biotin carboxylation">
    <location>
        <begin position="36"/>
        <end position="543"/>
    </location>
</feature>
<feature type="domain" description="ATP-grasp" evidence="3">
    <location>
        <begin position="189"/>
        <end position="381"/>
    </location>
</feature>
<feature type="domain" description="Biotinyl-binding" evidence="5">
    <location>
        <begin position="670"/>
        <end position="744"/>
    </location>
</feature>
<feature type="domain" description="CoA carboxyltransferase N-terminal" evidence="6">
    <location>
        <begin position="1492"/>
        <end position="1831"/>
    </location>
</feature>
<feature type="domain" description="CoA carboxyltransferase C-terminal" evidence="7">
    <location>
        <begin position="1835"/>
        <end position="2150"/>
    </location>
</feature>
<feature type="region of interest" description="Carboxyltransferase" evidence="8">
    <location>
        <begin position="1492"/>
        <end position="2150"/>
    </location>
</feature>
<feature type="active site" evidence="1">
    <location>
        <position position="356"/>
    </location>
</feature>
<feature type="binding site" evidence="3">
    <location>
        <begin position="215"/>
        <end position="272"/>
    </location>
    <ligand>
        <name>ATP</name>
        <dbReference type="ChEBI" id="CHEBI:30616"/>
    </ligand>
</feature>
<feature type="binding site" evidence="3 4">
    <location>
        <position position="338"/>
    </location>
    <ligand>
        <name>Mg(2+)</name>
        <dbReference type="ChEBI" id="CHEBI:18420"/>
        <label>1</label>
    </ligand>
</feature>
<feature type="binding site" evidence="3 4">
    <location>
        <position position="338"/>
    </location>
    <ligand>
        <name>Mn(2+)</name>
        <dbReference type="ChEBI" id="CHEBI:29035"/>
        <label>1</label>
    </ligand>
</feature>
<feature type="binding site" evidence="3 4">
    <location>
        <position position="352"/>
    </location>
    <ligand>
        <name>Mg(2+)</name>
        <dbReference type="ChEBI" id="CHEBI:18420"/>
        <label>1</label>
    </ligand>
</feature>
<feature type="binding site" evidence="3 4">
    <location>
        <position position="352"/>
    </location>
    <ligand>
        <name>Mg(2+)</name>
        <dbReference type="ChEBI" id="CHEBI:18420"/>
        <label>2</label>
    </ligand>
</feature>
<feature type="binding site" evidence="3 4">
    <location>
        <position position="352"/>
    </location>
    <ligand>
        <name>Mn(2+)</name>
        <dbReference type="ChEBI" id="CHEBI:29035"/>
        <label>1</label>
    </ligand>
</feature>
<feature type="binding site" evidence="3 4">
    <location>
        <position position="352"/>
    </location>
    <ligand>
        <name>Mn(2+)</name>
        <dbReference type="ChEBI" id="CHEBI:29035"/>
        <label>2</label>
    </ligand>
</feature>
<feature type="binding site" evidence="3 4">
    <location>
        <position position="354"/>
    </location>
    <ligand>
        <name>Mg(2+)</name>
        <dbReference type="ChEBI" id="CHEBI:18420"/>
        <label>2</label>
    </ligand>
</feature>
<feature type="binding site" evidence="3 4">
    <location>
        <position position="354"/>
    </location>
    <ligand>
        <name>Mn(2+)</name>
        <dbReference type="ChEBI" id="CHEBI:29035"/>
        <label>2</label>
    </ligand>
</feature>
<feature type="binding site" evidence="1">
    <location>
        <position position="1740"/>
    </location>
    <ligand>
        <name>CoA</name>
        <dbReference type="ChEBI" id="CHEBI:57287"/>
    </ligand>
</feature>
<feature type="binding site" evidence="1">
    <location>
        <position position="2041"/>
    </location>
    <ligand>
        <name>CoA</name>
        <dbReference type="ChEBI" id="CHEBI:57287"/>
    </ligand>
</feature>
<feature type="binding site" evidence="1">
    <location>
        <position position="2043"/>
    </location>
    <ligand>
        <name>CoA</name>
        <dbReference type="ChEBI" id="CHEBI:57287"/>
    </ligand>
</feature>
<feature type="modified residue" description="N6-biotinyllysine" evidence="5">
    <location>
        <position position="711"/>
    </location>
</feature>
<feature type="modified residue" description="Phosphothreonine" evidence="20">
    <location>
        <position position="1031"/>
    </location>
</feature>
<feature type="modified residue" description="Phosphoserine" evidence="20">
    <location>
        <position position="1192"/>
    </location>
</feature>
<feature type="mutagenesis site" description="In pas3-1; developmental phenotype and reduced levels of very long chain fatty acids in seeds." evidence="11">
    <original>E</original>
    <variation>K</variation>
    <location>
        <position position="1588"/>
    </location>
</feature>
<feature type="mutagenesis site" description="In pas3-2; developmental phenotype and reduced levels of very long chain fatty acids in seeds." evidence="11">
    <original>G</original>
    <variation>S</variation>
    <location>
        <position position="1787"/>
    </location>
</feature>
<feature type="sequence conflict" description="In Ref. 1; AAC41645 and 2; AAG40563." evidence="19" ref="1 2">
    <original>V</original>
    <variation>I</variation>
    <location>
        <position position="337"/>
    </location>
</feature>
<feature type="sequence conflict" description="In Ref. 1; AAC41645 and 2; AAG40563." evidence="19" ref="1 2">
    <original>EQ</original>
    <variation>DE</variation>
    <location>
        <begin position="1378"/>
        <end position="1379"/>
    </location>
</feature>